<sequence>MLEDLRANSWSLRPCCMVLAYRVAHFCSVWRKKNVLNNLWAAPLLVLYRIITECFFGYEIQAAATIGRRFTIHHGYAVVINKNVVAGDDFTIRHGVTIGNRGADNMACPHIGNGVELGANVIILGDITLGNNVTVGAGSVVLDSVPDNALVVGEKARVKVIK</sequence>
<proteinExistence type="inferred from homology"/>
<name>WCAB_SHIFL</name>
<protein>
    <recommendedName>
        <fullName>Putative colanic acid biosynthesis acetyltransferase WcaB</fullName>
        <ecNumber>2.3.1.-</ecNumber>
    </recommendedName>
</protein>
<gene>
    <name type="primary">wcaB</name>
    <name type="ordered locus">SF2122</name>
    <name type="ordered locus">S2246</name>
</gene>
<evidence type="ECO:0000305" key="1"/>
<reference key="1">
    <citation type="journal article" date="2002" name="Nucleic Acids Res.">
        <title>Genome sequence of Shigella flexneri 2a: insights into pathogenicity through comparison with genomes of Escherichia coli K12 and O157.</title>
        <authorList>
            <person name="Jin Q."/>
            <person name="Yuan Z."/>
            <person name="Xu J."/>
            <person name="Wang Y."/>
            <person name="Shen Y."/>
            <person name="Lu W."/>
            <person name="Wang J."/>
            <person name="Liu H."/>
            <person name="Yang J."/>
            <person name="Yang F."/>
            <person name="Zhang X."/>
            <person name="Zhang J."/>
            <person name="Yang G."/>
            <person name="Wu H."/>
            <person name="Qu D."/>
            <person name="Dong J."/>
            <person name="Sun L."/>
            <person name="Xue Y."/>
            <person name="Zhao A."/>
            <person name="Gao Y."/>
            <person name="Zhu J."/>
            <person name="Kan B."/>
            <person name="Ding K."/>
            <person name="Chen S."/>
            <person name="Cheng H."/>
            <person name="Yao Z."/>
            <person name="He B."/>
            <person name="Chen R."/>
            <person name="Ma D."/>
            <person name="Qiang B."/>
            <person name="Wen Y."/>
            <person name="Hou Y."/>
            <person name="Yu J."/>
        </authorList>
    </citation>
    <scope>NUCLEOTIDE SEQUENCE [LARGE SCALE GENOMIC DNA]</scope>
    <source>
        <strain>301 / Serotype 2a</strain>
    </source>
</reference>
<reference key="2">
    <citation type="journal article" date="2003" name="Infect. Immun.">
        <title>Complete genome sequence and comparative genomics of Shigella flexneri serotype 2a strain 2457T.</title>
        <authorList>
            <person name="Wei J."/>
            <person name="Goldberg M.B."/>
            <person name="Burland V."/>
            <person name="Venkatesan M.M."/>
            <person name="Deng W."/>
            <person name="Fournier G."/>
            <person name="Mayhew G.F."/>
            <person name="Plunkett G. III"/>
            <person name="Rose D.J."/>
            <person name="Darling A."/>
            <person name="Mau B."/>
            <person name="Perna N.T."/>
            <person name="Payne S.M."/>
            <person name="Runyen-Janecky L.J."/>
            <person name="Zhou S."/>
            <person name="Schwartz D.C."/>
            <person name="Blattner F.R."/>
        </authorList>
    </citation>
    <scope>NUCLEOTIDE SEQUENCE [LARGE SCALE GENOMIC DNA]</scope>
    <source>
        <strain>ATCC 700930 / 2457T / Serotype 2a</strain>
    </source>
</reference>
<organism>
    <name type="scientific">Shigella flexneri</name>
    <dbReference type="NCBI Taxonomy" id="623"/>
    <lineage>
        <taxon>Bacteria</taxon>
        <taxon>Pseudomonadati</taxon>
        <taxon>Pseudomonadota</taxon>
        <taxon>Gammaproteobacteria</taxon>
        <taxon>Enterobacterales</taxon>
        <taxon>Enterobacteriaceae</taxon>
        <taxon>Shigella</taxon>
    </lineage>
</organism>
<accession>P0ACD1</accession>
<accession>P77558</accession>
<feature type="chain" id="PRO_0000068735" description="Putative colanic acid biosynthesis acetyltransferase WcaB">
    <location>
        <begin position="1"/>
        <end position="162"/>
    </location>
</feature>
<dbReference type="EC" id="2.3.1.-"/>
<dbReference type="EMBL" id="AE005674">
    <property type="protein sequence ID" value="AAN43660.2"/>
    <property type="molecule type" value="Genomic_DNA"/>
</dbReference>
<dbReference type="EMBL" id="AE014073">
    <property type="protein sequence ID" value="AAP17488.1"/>
    <property type="molecule type" value="Genomic_DNA"/>
</dbReference>
<dbReference type="RefSeq" id="NP_707953.2">
    <property type="nucleotide sequence ID" value="NC_004337.2"/>
</dbReference>
<dbReference type="RefSeq" id="WP_000888740.1">
    <property type="nucleotide sequence ID" value="NZ_WPGW01000038.1"/>
</dbReference>
<dbReference type="SMR" id="P0ACD1"/>
<dbReference type="STRING" id="198214.SF2122"/>
<dbReference type="PaxDb" id="198214-SF2122"/>
<dbReference type="GeneID" id="1026331"/>
<dbReference type="GeneID" id="93775133"/>
<dbReference type="KEGG" id="sfl:SF2122"/>
<dbReference type="KEGG" id="sfx:S2246"/>
<dbReference type="PATRIC" id="fig|198214.7.peg.2531"/>
<dbReference type="HOGENOM" id="CLU_051638_10_2_6"/>
<dbReference type="UniPathway" id="UPA00936"/>
<dbReference type="Proteomes" id="UP000001006">
    <property type="component" value="Chromosome"/>
</dbReference>
<dbReference type="Proteomes" id="UP000002673">
    <property type="component" value="Chromosome"/>
</dbReference>
<dbReference type="GO" id="GO:0005737">
    <property type="term" value="C:cytoplasm"/>
    <property type="evidence" value="ECO:0007669"/>
    <property type="project" value="InterPro"/>
</dbReference>
<dbReference type="GO" id="GO:0009001">
    <property type="term" value="F:serine O-acetyltransferase activity"/>
    <property type="evidence" value="ECO:0007669"/>
    <property type="project" value="InterPro"/>
</dbReference>
<dbReference type="GO" id="GO:0006535">
    <property type="term" value="P:cysteine biosynthetic process from serine"/>
    <property type="evidence" value="ECO:0007669"/>
    <property type="project" value="InterPro"/>
</dbReference>
<dbReference type="GO" id="GO:0009103">
    <property type="term" value="P:lipopolysaccharide biosynthetic process"/>
    <property type="evidence" value="ECO:0007669"/>
    <property type="project" value="UniProtKB-KW"/>
</dbReference>
<dbReference type="GO" id="GO:0045228">
    <property type="term" value="P:slime layer polysaccharide biosynthetic process"/>
    <property type="evidence" value="ECO:0007669"/>
    <property type="project" value="UniProtKB-UniPathway"/>
</dbReference>
<dbReference type="CDD" id="cd03354">
    <property type="entry name" value="LbH_SAT"/>
    <property type="match status" value="1"/>
</dbReference>
<dbReference type="FunFam" id="2.160.10.10:FF:000013">
    <property type="entry name" value="Acetyltransferase"/>
    <property type="match status" value="1"/>
</dbReference>
<dbReference type="Gene3D" id="2.160.10.10">
    <property type="entry name" value="Hexapeptide repeat proteins"/>
    <property type="match status" value="1"/>
</dbReference>
<dbReference type="InterPro" id="IPR024027">
    <property type="entry name" value="Colanic_acid_synth_WcaB"/>
</dbReference>
<dbReference type="InterPro" id="IPR001451">
    <property type="entry name" value="Hexapep"/>
</dbReference>
<dbReference type="InterPro" id="IPR018357">
    <property type="entry name" value="Hexapep_transf_CS"/>
</dbReference>
<dbReference type="InterPro" id="IPR045304">
    <property type="entry name" value="LbH_SAT"/>
</dbReference>
<dbReference type="InterPro" id="IPR005881">
    <property type="entry name" value="Ser_O-AcTrfase"/>
</dbReference>
<dbReference type="InterPro" id="IPR011004">
    <property type="entry name" value="Trimer_LpxA-like_sf"/>
</dbReference>
<dbReference type="NCBIfam" id="NF007564">
    <property type="entry name" value="PRK10191.1"/>
    <property type="match status" value="1"/>
</dbReference>
<dbReference type="NCBIfam" id="TIGR04016">
    <property type="entry name" value="WcaB"/>
    <property type="match status" value="1"/>
</dbReference>
<dbReference type="PANTHER" id="PTHR42811">
    <property type="entry name" value="SERINE ACETYLTRANSFERASE"/>
    <property type="match status" value="1"/>
</dbReference>
<dbReference type="Pfam" id="PF00132">
    <property type="entry name" value="Hexapep"/>
    <property type="match status" value="1"/>
</dbReference>
<dbReference type="PIRSF" id="PIRSF000441">
    <property type="entry name" value="CysE"/>
    <property type="match status" value="1"/>
</dbReference>
<dbReference type="SUPFAM" id="SSF51161">
    <property type="entry name" value="Trimeric LpxA-like enzymes"/>
    <property type="match status" value="1"/>
</dbReference>
<dbReference type="PROSITE" id="PS00101">
    <property type="entry name" value="HEXAPEP_TRANSFERASES"/>
    <property type="match status" value="1"/>
</dbReference>
<keyword id="KW-0012">Acyltransferase</keyword>
<keyword id="KW-0448">Lipopolysaccharide biosynthesis</keyword>
<keyword id="KW-1185">Reference proteome</keyword>
<keyword id="KW-0677">Repeat</keyword>
<keyword id="KW-0808">Transferase</keyword>
<comment type="pathway">
    <text>Slime biogenesis; slime polysaccharide biosynthesis.</text>
</comment>
<comment type="similarity">
    <text evidence="1">Belongs to the transferase hexapeptide repeat family.</text>
</comment>